<keyword id="KW-1185">Reference proteome</keyword>
<reference key="1">
    <citation type="journal article" date="2008" name="J. Bacteriol.">
        <title>The pangenome structure of Escherichia coli: comparative genomic analysis of E. coli commensal and pathogenic isolates.</title>
        <authorList>
            <person name="Rasko D.A."/>
            <person name="Rosovitz M.J."/>
            <person name="Myers G.S.A."/>
            <person name="Mongodin E.F."/>
            <person name="Fricke W.F."/>
            <person name="Gajer P."/>
            <person name="Crabtree J."/>
            <person name="Sebaihia M."/>
            <person name="Thomson N.R."/>
            <person name="Chaudhuri R."/>
            <person name="Henderson I.R."/>
            <person name="Sperandio V."/>
            <person name="Ravel J."/>
        </authorList>
    </citation>
    <scope>NUCLEOTIDE SEQUENCE [LARGE SCALE GENOMIC DNA]</scope>
    <source>
        <strain>E24377A / ETEC</strain>
    </source>
</reference>
<sequence>MTIWVDADACPNVIKEILYRAAERMQMPLVLVANQSLRVPPSRFIRTLRVAAGFDVADNEIVRQCEAGDLVITADIPLAAEAIEKGAAALNPRGERYTPATIRERLTMRDFMDTLRASGIQTGGPDSLSQRDRQAFAAELEKWWLEVQRSRG</sequence>
<protein>
    <recommendedName>
        <fullName evidence="1">UPF0178 protein YaiI</fullName>
    </recommendedName>
</protein>
<feature type="chain" id="PRO_1000060445" description="UPF0178 protein YaiI">
    <location>
        <begin position="1"/>
        <end position="152"/>
    </location>
</feature>
<accession>A7ZID6</accession>
<proteinExistence type="inferred from homology"/>
<gene>
    <name evidence="1" type="primary">yaiI</name>
    <name type="ordered locus">EcE24377A_0414</name>
</gene>
<comment type="similarity">
    <text evidence="1">Belongs to the UPF0178 family.</text>
</comment>
<evidence type="ECO:0000255" key="1">
    <source>
        <dbReference type="HAMAP-Rule" id="MF_00489"/>
    </source>
</evidence>
<organism>
    <name type="scientific">Escherichia coli O139:H28 (strain E24377A / ETEC)</name>
    <dbReference type="NCBI Taxonomy" id="331111"/>
    <lineage>
        <taxon>Bacteria</taxon>
        <taxon>Pseudomonadati</taxon>
        <taxon>Pseudomonadota</taxon>
        <taxon>Gammaproteobacteria</taxon>
        <taxon>Enterobacterales</taxon>
        <taxon>Enterobacteriaceae</taxon>
        <taxon>Escherichia</taxon>
    </lineage>
</organism>
<name>YAII_ECO24</name>
<dbReference type="EMBL" id="CP000800">
    <property type="protein sequence ID" value="ABV19554.1"/>
    <property type="molecule type" value="Genomic_DNA"/>
</dbReference>
<dbReference type="RefSeq" id="WP_000158159.1">
    <property type="nucleotide sequence ID" value="NC_009801.1"/>
</dbReference>
<dbReference type="KEGG" id="ecw:EcE24377A_0414"/>
<dbReference type="HOGENOM" id="CLU_106619_2_1_6"/>
<dbReference type="Proteomes" id="UP000001122">
    <property type="component" value="Chromosome"/>
</dbReference>
<dbReference type="CDD" id="cd18720">
    <property type="entry name" value="PIN_YqxD-like"/>
    <property type="match status" value="1"/>
</dbReference>
<dbReference type="HAMAP" id="MF_00489">
    <property type="entry name" value="UPF0178"/>
    <property type="match status" value="1"/>
</dbReference>
<dbReference type="InterPro" id="IPR003791">
    <property type="entry name" value="UPF0178"/>
</dbReference>
<dbReference type="NCBIfam" id="NF001095">
    <property type="entry name" value="PRK00124.1"/>
    <property type="match status" value="1"/>
</dbReference>
<dbReference type="PANTHER" id="PTHR35146">
    <property type="entry name" value="UPF0178 PROTEIN YAII"/>
    <property type="match status" value="1"/>
</dbReference>
<dbReference type="PANTHER" id="PTHR35146:SF1">
    <property type="entry name" value="UPF0178 PROTEIN YAII"/>
    <property type="match status" value="1"/>
</dbReference>
<dbReference type="Pfam" id="PF02639">
    <property type="entry name" value="DUF188"/>
    <property type="match status" value="1"/>
</dbReference>